<organism>
    <name type="scientific">Lactobacillus delbrueckii subsp. bulgaricus (strain ATCC 11842 / DSM 20081 / BCRC 10696 / JCM 1002 / NBRC 13953 / NCIMB 11778 / NCTC 12712 / WDCM 00102 / Lb 14)</name>
    <dbReference type="NCBI Taxonomy" id="390333"/>
    <lineage>
        <taxon>Bacteria</taxon>
        <taxon>Bacillati</taxon>
        <taxon>Bacillota</taxon>
        <taxon>Bacilli</taxon>
        <taxon>Lactobacillales</taxon>
        <taxon>Lactobacillaceae</taxon>
        <taxon>Lactobacillus</taxon>
    </lineage>
</organism>
<protein>
    <recommendedName>
        <fullName evidence="1">Asparagine--tRNA ligase</fullName>
        <ecNumber evidence="1">6.1.1.22</ecNumber>
    </recommendedName>
    <alternativeName>
        <fullName evidence="1">Asparaginyl-tRNA synthetase</fullName>
        <shortName evidence="1">AsnRS</shortName>
    </alternativeName>
</protein>
<reference key="1">
    <citation type="journal article" date="1996" name="J. Bacteriol.">
        <title>Lactobacillus bulgaricus asparagine synthetase and asparaginyl-tRNA synthetase: coregulation by transcription antitermination?</title>
        <authorList>
            <person name="Kim S.I."/>
            <person name="Germond J.-E."/>
            <person name="Pridmore D."/>
            <person name="Soell D."/>
        </authorList>
    </citation>
    <scope>NUCLEOTIDE SEQUENCE [GENOMIC DNA]</scope>
</reference>
<reference key="2">
    <citation type="journal article" date="1996" name="Nucleic Acids Res.">
        <title>Asn-tRNA in Lactobacillus bulgaricus is formed by asparaginylation of tRNA and not by transamidation of Asp-tRNA.</title>
        <authorList>
            <person name="Kim S.I."/>
            <person name="Nalaskowska M."/>
            <person name="Germond J.-E."/>
            <person name="Pridmore D."/>
            <person name="Soell D."/>
        </authorList>
    </citation>
    <scope>NUCLEOTIDE SEQUENCE [GENOMIC DNA]</scope>
</reference>
<reference key="3">
    <citation type="journal article" date="2006" name="Proc. Natl. Acad. Sci. U.S.A.">
        <title>The complete genome sequence of Lactobacillus bulgaricus reveals extensive and ongoing reductive evolution.</title>
        <authorList>
            <person name="van de Guchte M."/>
            <person name="Penaud S."/>
            <person name="Grimaldi C."/>
            <person name="Barbe V."/>
            <person name="Bryson K."/>
            <person name="Nicolas P."/>
            <person name="Robert C."/>
            <person name="Oztas S."/>
            <person name="Mangenot S."/>
            <person name="Couloux A."/>
            <person name="Loux V."/>
            <person name="Dervyn R."/>
            <person name="Bossy R."/>
            <person name="Bolotin A."/>
            <person name="Batto J.-M."/>
            <person name="Walunas T."/>
            <person name="Gibrat J.-F."/>
            <person name="Bessieres P."/>
            <person name="Weissenbach J."/>
            <person name="Ehrlich S.D."/>
            <person name="Maguin E."/>
        </authorList>
    </citation>
    <scope>NUCLEOTIDE SEQUENCE [LARGE SCALE GENOMIC DNA]</scope>
    <source>
        <strain>ATCC 11842 / DSM 20081 / BCRC 10696 / JCM 1002 / NBRC 13953 / NCIMB 11778 / NCTC 12712 / WDCM 00102 / Lb 14</strain>
    </source>
</reference>
<feature type="chain" id="PRO_0000176415" description="Asparagine--tRNA ligase">
    <location>
        <begin position="1"/>
        <end position="432"/>
    </location>
</feature>
<feature type="sequence conflict" description="In Ref. 1; CAA61604." evidence="2" ref="1">
    <original>V</original>
    <variation>L</variation>
    <location>
        <position position="266"/>
    </location>
</feature>
<evidence type="ECO:0000255" key="1">
    <source>
        <dbReference type="HAMAP-Rule" id="MF_00534"/>
    </source>
</evidence>
<evidence type="ECO:0000305" key="2"/>
<keyword id="KW-0030">Aminoacyl-tRNA synthetase</keyword>
<keyword id="KW-0067">ATP-binding</keyword>
<keyword id="KW-0963">Cytoplasm</keyword>
<keyword id="KW-0436">Ligase</keyword>
<keyword id="KW-0547">Nucleotide-binding</keyword>
<keyword id="KW-0648">Protein biosynthesis</keyword>
<keyword id="KW-1185">Reference proteome</keyword>
<accession>P54262</accession>
<accession>P77878</accession>
<accession>Q1G9Z5</accession>
<proteinExistence type="inferred from homology"/>
<dbReference type="EC" id="6.1.1.22" evidence="1"/>
<dbReference type="EMBL" id="X89438">
    <property type="protein sequence ID" value="CAA61603.1"/>
    <property type="molecule type" value="Genomic_DNA"/>
</dbReference>
<dbReference type="EMBL" id="X89439">
    <property type="protein sequence ID" value="CAA61604.1"/>
    <property type="molecule type" value="Genomic_DNA"/>
</dbReference>
<dbReference type="EMBL" id="CR954253">
    <property type="protein sequence ID" value="CAI97806.1"/>
    <property type="molecule type" value="Genomic_DNA"/>
</dbReference>
<dbReference type="EMBL" id="CR954253">
    <property type="protein sequence ID" value="CAI97997.1"/>
    <property type="molecule type" value="Genomic_DNA"/>
</dbReference>
<dbReference type="PIR" id="S71072">
    <property type="entry name" value="S71072"/>
</dbReference>
<dbReference type="PIR" id="S71074">
    <property type="entry name" value="S71074"/>
</dbReference>
<dbReference type="RefSeq" id="WP_011543871.1">
    <property type="nucleotide sequence ID" value="NZ_JAQZAR010000045.1"/>
</dbReference>
<dbReference type="SMR" id="P54262"/>
<dbReference type="STRING" id="390333.Ldb1004"/>
<dbReference type="KEGG" id="ldb:Ldb1004"/>
<dbReference type="KEGG" id="ldb:Ldb1195"/>
<dbReference type="PATRIC" id="fig|390333.7.peg.1065"/>
<dbReference type="eggNOG" id="COG0017">
    <property type="taxonomic scope" value="Bacteria"/>
</dbReference>
<dbReference type="HOGENOM" id="CLU_004553_2_0_9"/>
<dbReference type="BioCyc" id="LDEL390333:LDB_RS04395-MONOMER"/>
<dbReference type="BioCyc" id="LDEL390333:LDB_RS05130-MONOMER"/>
<dbReference type="Proteomes" id="UP000001259">
    <property type="component" value="Chromosome"/>
</dbReference>
<dbReference type="GO" id="GO:0005737">
    <property type="term" value="C:cytoplasm"/>
    <property type="evidence" value="ECO:0007669"/>
    <property type="project" value="UniProtKB-SubCell"/>
</dbReference>
<dbReference type="GO" id="GO:0004816">
    <property type="term" value="F:asparagine-tRNA ligase activity"/>
    <property type="evidence" value="ECO:0007669"/>
    <property type="project" value="UniProtKB-UniRule"/>
</dbReference>
<dbReference type="GO" id="GO:0005524">
    <property type="term" value="F:ATP binding"/>
    <property type="evidence" value="ECO:0007669"/>
    <property type="project" value="UniProtKB-UniRule"/>
</dbReference>
<dbReference type="GO" id="GO:0140096">
    <property type="term" value="F:catalytic activity, acting on a protein"/>
    <property type="evidence" value="ECO:0007669"/>
    <property type="project" value="UniProtKB-ARBA"/>
</dbReference>
<dbReference type="GO" id="GO:0003676">
    <property type="term" value="F:nucleic acid binding"/>
    <property type="evidence" value="ECO:0007669"/>
    <property type="project" value="InterPro"/>
</dbReference>
<dbReference type="GO" id="GO:0016740">
    <property type="term" value="F:transferase activity"/>
    <property type="evidence" value="ECO:0007669"/>
    <property type="project" value="UniProtKB-ARBA"/>
</dbReference>
<dbReference type="GO" id="GO:0006421">
    <property type="term" value="P:asparaginyl-tRNA aminoacylation"/>
    <property type="evidence" value="ECO:0007669"/>
    <property type="project" value="UniProtKB-UniRule"/>
</dbReference>
<dbReference type="CDD" id="cd04323">
    <property type="entry name" value="AsnRS_cyto_like_N"/>
    <property type="match status" value="1"/>
</dbReference>
<dbReference type="CDD" id="cd00776">
    <property type="entry name" value="AsxRS_core"/>
    <property type="match status" value="1"/>
</dbReference>
<dbReference type="Gene3D" id="3.30.930.10">
    <property type="entry name" value="Bira Bifunctional Protein, Domain 2"/>
    <property type="match status" value="1"/>
</dbReference>
<dbReference type="Gene3D" id="2.40.50.140">
    <property type="entry name" value="Nucleic acid-binding proteins"/>
    <property type="match status" value="1"/>
</dbReference>
<dbReference type="HAMAP" id="MF_00534">
    <property type="entry name" value="Asn_tRNA_synth"/>
    <property type="match status" value="1"/>
</dbReference>
<dbReference type="InterPro" id="IPR004364">
    <property type="entry name" value="Aa-tRNA-synt_II"/>
</dbReference>
<dbReference type="InterPro" id="IPR006195">
    <property type="entry name" value="aa-tRNA-synth_II"/>
</dbReference>
<dbReference type="InterPro" id="IPR045864">
    <property type="entry name" value="aa-tRNA-synth_II/BPL/LPL"/>
</dbReference>
<dbReference type="InterPro" id="IPR004522">
    <property type="entry name" value="Asn-tRNA-ligase"/>
</dbReference>
<dbReference type="InterPro" id="IPR002312">
    <property type="entry name" value="Asp/Asn-tRNA-synth_IIb"/>
</dbReference>
<dbReference type="InterPro" id="IPR012340">
    <property type="entry name" value="NA-bd_OB-fold"/>
</dbReference>
<dbReference type="InterPro" id="IPR004365">
    <property type="entry name" value="NA-bd_OB_tRNA"/>
</dbReference>
<dbReference type="NCBIfam" id="TIGR00457">
    <property type="entry name" value="asnS"/>
    <property type="match status" value="1"/>
</dbReference>
<dbReference type="NCBIfam" id="NF003037">
    <property type="entry name" value="PRK03932.1"/>
    <property type="match status" value="1"/>
</dbReference>
<dbReference type="PANTHER" id="PTHR22594:SF34">
    <property type="entry name" value="ASPARAGINE--TRNA LIGASE, MITOCHONDRIAL-RELATED"/>
    <property type="match status" value="1"/>
</dbReference>
<dbReference type="PANTHER" id="PTHR22594">
    <property type="entry name" value="ASPARTYL/LYSYL-TRNA SYNTHETASE"/>
    <property type="match status" value="1"/>
</dbReference>
<dbReference type="Pfam" id="PF00152">
    <property type="entry name" value="tRNA-synt_2"/>
    <property type="match status" value="1"/>
</dbReference>
<dbReference type="Pfam" id="PF01336">
    <property type="entry name" value="tRNA_anti-codon"/>
    <property type="match status" value="1"/>
</dbReference>
<dbReference type="PRINTS" id="PR01042">
    <property type="entry name" value="TRNASYNTHASP"/>
</dbReference>
<dbReference type="SUPFAM" id="SSF55681">
    <property type="entry name" value="Class II aaRS and biotin synthetases"/>
    <property type="match status" value="1"/>
</dbReference>
<dbReference type="SUPFAM" id="SSF50249">
    <property type="entry name" value="Nucleic acid-binding proteins"/>
    <property type="match status" value="1"/>
</dbReference>
<dbReference type="PROSITE" id="PS50862">
    <property type="entry name" value="AA_TRNA_LIGASE_II"/>
    <property type="match status" value="1"/>
</dbReference>
<sequence>MTELISIRESSKHVDEEVRMHVWLTDKRSSGKIVFLQLRDGTAFFQGVVRKNDVSEEVFEAAKGLRQEASFYLTGTIHEDARSHFGYEIQISDLEVVSNNEGYPITNKEHGIDFLLDHRHLWLRSRRPFAIMQIRNRIFKATVDFFENEGFVKFDAPLLMHSAPEGTTELFHIDYFNHDAYLSQSGQLYGEVGAEAFGKIFTFGPTFRAEASKTRRHLTEFWMMEPEMAWMHQDESLDLQERFLSYVVGQVLEHCEYELSILGRDVDKLRPAAEGNYTRLSYDDAVKMLQEAGKDFKWGDDFGAPDEAFLSEQFDRPFFIVNYPVAIKPFYMKKNPENPLTYLCADVEAPEGYGEIMGGSEREADYDTLKAQIEEAGLNLDDYSWYLDLRKYGSVPHSGFGMGFERVIAWICKLDHVREAVPFPRMINRMQP</sequence>
<name>SYN_LACDA</name>
<comment type="catalytic activity">
    <reaction evidence="1">
        <text>tRNA(Asn) + L-asparagine + ATP = L-asparaginyl-tRNA(Asn) + AMP + diphosphate + H(+)</text>
        <dbReference type="Rhea" id="RHEA:11180"/>
        <dbReference type="Rhea" id="RHEA-COMP:9659"/>
        <dbReference type="Rhea" id="RHEA-COMP:9674"/>
        <dbReference type="ChEBI" id="CHEBI:15378"/>
        <dbReference type="ChEBI" id="CHEBI:30616"/>
        <dbReference type="ChEBI" id="CHEBI:33019"/>
        <dbReference type="ChEBI" id="CHEBI:58048"/>
        <dbReference type="ChEBI" id="CHEBI:78442"/>
        <dbReference type="ChEBI" id="CHEBI:78515"/>
        <dbReference type="ChEBI" id="CHEBI:456215"/>
        <dbReference type="EC" id="6.1.1.22"/>
    </reaction>
</comment>
<comment type="subunit">
    <text evidence="1">Homodimer.</text>
</comment>
<comment type="subcellular location">
    <subcellularLocation>
        <location>Cytoplasm</location>
    </subcellularLocation>
</comment>
<comment type="similarity">
    <text evidence="1">Belongs to the class-II aminoacyl-tRNA synthetase family.</text>
</comment>
<gene>
    <name evidence="1" type="primary">asnS1</name>
    <name type="synonym">asnS</name>
    <name type="synonym">asnSa</name>
    <name type="ordered locus">Ldb1004</name>
</gene>
<gene>
    <name evidence="1" type="primary">asnS2</name>
    <name type="synonym">asnSb</name>
    <name type="ordered locus">Ldb1195</name>
</gene>